<name>MURI_STAAB</name>
<feature type="chain" id="PRO_1000047617" description="Glutamate racemase">
    <location>
        <begin position="1"/>
        <end position="266"/>
    </location>
</feature>
<feature type="active site" description="Proton donor/acceptor" evidence="1">
    <location>
        <position position="72"/>
    </location>
</feature>
<feature type="active site" description="Proton donor/acceptor" evidence="1">
    <location>
        <position position="184"/>
    </location>
</feature>
<feature type="binding site" evidence="1">
    <location>
        <begin position="9"/>
        <end position="10"/>
    </location>
    <ligand>
        <name>substrate</name>
    </ligand>
</feature>
<feature type="binding site" evidence="1">
    <location>
        <begin position="41"/>
        <end position="42"/>
    </location>
    <ligand>
        <name>substrate</name>
    </ligand>
</feature>
<feature type="binding site" evidence="1">
    <location>
        <begin position="73"/>
        <end position="74"/>
    </location>
    <ligand>
        <name>substrate</name>
    </ligand>
</feature>
<feature type="binding site" evidence="1">
    <location>
        <begin position="185"/>
        <end position="186"/>
    </location>
    <ligand>
        <name>substrate</name>
    </ligand>
</feature>
<dbReference type="EC" id="5.1.1.3" evidence="1"/>
<dbReference type="EMBL" id="AJ938182">
    <property type="protein sequence ID" value="CAI80702.1"/>
    <property type="molecule type" value="Genomic_DNA"/>
</dbReference>
<dbReference type="RefSeq" id="WP_001039666.1">
    <property type="nucleotide sequence ID" value="NC_007622.1"/>
</dbReference>
<dbReference type="SMR" id="Q2YXC5"/>
<dbReference type="KEGG" id="sab:SAB1014"/>
<dbReference type="HOGENOM" id="CLU_052344_0_2_9"/>
<dbReference type="UniPathway" id="UPA00219"/>
<dbReference type="GO" id="GO:0008881">
    <property type="term" value="F:glutamate racemase activity"/>
    <property type="evidence" value="ECO:0007669"/>
    <property type="project" value="UniProtKB-UniRule"/>
</dbReference>
<dbReference type="GO" id="GO:0071555">
    <property type="term" value="P:cell wall organization"/>
    <property type="evidence" value="ECO:0007669"/>
    <property type="project" value="UniProtKB-KW"/>
</dbReference>
<dbReference type="GO" id="GO:0009252">
    <property type="term" value="P:peptidoglycan biosynthetic process"/>
    <property type="evidence" value="ECO:0007669"/>
    <property type="project" value="UniProtKB-UniRule"/>
</dbReference>
<dbReference type="GO" id="GO:0008360">
    <property type="term" value="P:regulation of cell shape"/>
    <property type="evidence" value="ECO:0007669"/>
    <property type="project" value="UniProtKB-KW"/>
</dbReference>
<dbReference type="FunFam" id="3.40.50.1860:FF:000002">
    <property type="entry name" value="Glutamate racemase"/>
    <property type="match status" value="1"/>
</dbReference>
<dbReference type="Gene3D" id="3.40.50.1860">
    <property type="match status" value="2"/>
</dbReference>
<dbReference type="HAMAP" id="MF_00258">
    <property type="entry name" value="Glu_racemase"/>
    <property type="match status" value="1"/>
</dbReference>
<dbReference type="InterPro" id="IPR015942">
    <property type="entry name" value="Asp/Glu/hydantoin_racemase"/>
</dbReference>
<dbReference type="InterPro" id="IPR001920">
    <property type="entry name" value="Asp/Glu_race"/>
</dbReference>
<dbReference type="InterPro" id="IPR018187">
    <property type="entry name" value="Asp/Glu_racemase_AS_1"/>
</dbReference>
<dbReference type="InterPro" id="IPR033134">
    <property type="entry name" value="Asp/Glu_racemase_AS_2"/>
</dbReference>
<dbReference type="InterPro" id="IPR004391">
    <property type="entry name" value="Glu_race"/>
</dbReference>
<dbReference type="NCBIfam" id="TIGR00067">
    <property type="entry name" value="glut_race"/>
    <property type="match status" value="1"/>
</dbReference>
<dbReference type="NCBIfam" id="NF002035">
    <property type="entry name" value="PRK00865.1-3"/>
    <property type="match status" value="1"/>
</dbReference>
<dbReference type="PANTHER" id="PTHR21198">
    <property type="entry name" value="GLUTAMATE RACEMASE"/>
    <property type="match status" value="1"/>
</dbReference>
<dbReference type="PANTHER" id="PTHR21198:SF2">
    <property type="entry name" value="GLUTAMATE RACEMASE"/>
    <property type="match status" value="1"/>
</dbReference>
<dbReference type="Pfam" id="PF01177">
    <property type="entry name" value="Asp_Glu_race"/>
    <property type="match status" value="1"/>
</dbReference>
<dbReference type="SUPFAM" id="SSF53681">
    <property type="entry name" value="Aspartate/glutamate racemase"/>
    <property type="match status" value="2"/>
</dbReference>
<dbReference type="PROSITE" id="PS00923">
    <property type="entry name" value="ASP_GLU_RACEMASE_1"/>
    <property type="match status" value="1"/>
</dbReference>
<dbReference type="PROSITE" id="PS00924">
    <property type="entry name" value="ASP_GLU_RACEMASE_2"/>
    <property type="match status" value="1"/>
</dbReference>
<protein>
    <recommendedName>
        <fullName evidence="1">Glutamate racemase</fullName>
        <ecNumber evidence="1">5.1.1.3</ecNumber>
    </recommendedName>
</protein>
<reference key="1">
    <citation type="journal article" date="2007" name="PLoS ONE">
        <title>Molecular correlates of host specialization in Staphylococcus aureus.</title>
        <authorList>
            <person name="Herron-Olson L."/>
            <person name="Fitzgerald J.R."/>
            <person name="Musser J.M."/>
            <person name="Kapur V."/>
        </authorList>
    </citation>
    <scope>NUCLEOTIDE SEQUENCE [LARGE SCALE GENOMIC DNA]</scope>
    <source>
        <strain>bovine RF122 / ET3-1</strain>
    </source>
</reference>
<organism>
    <name type="scientific">Staphylococcus aureus (strain bovine RF122 / ET3-1)</name>
    <dbReference type="NCBI Taxonomy" id="273036"/>
    <lineage>
        <taxon>Bacteria</taxon>
        <taxon>Bacillati</taxon>
        <taxon>Bacillota</taxon>
        <taxon>Bacilli</taxon>
        <taxon>Bacillales</taxon>
        <taxon>Staphylococcaceae</taxon>
        <taxon>Staphylococcus</taxon>
    </lineage>
</organism>
<keyword id="KW-0133">Cell shape</keyword>
<keyword id="KW-0961">Cell wall biogenesis/degradation</keyword>
<keyword id="KW-0413">Isomerase</keyword>
<keyword id="KW-0573">Peptidoglycan synthesis</keyword>
<evidence type="ECO:0000255" key="1">
    <source>
        <dbReference type="HAMAP-Rule" id="MF_00258"/>
    </source>
</evidence>
<comment type="function">
    <text evidence="1">Provides the (R)-glutamate required for cell wall biosynthesis.</text>
</comment>
<comment type="catalytic activity">
    <reaction evidence="1">
        <text>L-glutamate = D-glutamate</text>
        <dbReference type="Rhea" id="RHEA:12813"/>
        <dbReference type="ChEBI" id="CHEBI:29985"/>
        <dbReference type="ChEBI" id="CHEBI:29986"/>
        <dbReference type="EC" id="5.1.1.3"/>
    </reaction>
</comment>
<comment type="pathway">
    <text evidence="1">Cell wall biogenesis; peptidoglycan biosynthesis.</text>
</comment>
<comment type="similarity">
    <text evidence="1">Belongs to the aspartate/glutamate racemases family.</text>
</comment>
<proteinExistence type="inferred from homology"/>
<gene>
    <name evidence="1" type="primary">murI</name>
    <name type="ordered locus">SAB1014</name>
</gene>
<sequence>MNKPIGVIDSGVGGLTVAKEIMRQLPNETIYYLGDIGRCPYGPRPGEQVKQYTVEIARKLMGFDIKMLVIACNTATAVALEYLQKTLSIPVIGVIEPGARTAIMTTRNQNVLVLGTEGTIKSEAYRTHIKRINPHVEVHGVACPGFVPLVEQMRYSDPTITSIVIHQTLKRWRNSESDTVILGCTHYPLLYKPIYDYFGGKKTVISSGLETAREVSALLTFSNEHASYTEHPDHRFFATGDTTHITNIIKEWLNLSVNVERISVND</sequence>
<accession>Q2YXC5</accession>